<sequence length="314" mass="35397">MKNKKQPVVILVGPTAVGKTKLSIGLAKMLNAEIISGDSMQVYKGMDIGTAKVTEEETEGVPHHLIDILEPSDTFSTADYQKMVRGKITEIADRGKLPMIVGGTGLYIQSVLYDYTFTENSGDPVFRERMEKLAAEEGAEALHAKLAAADPEAAAAIHQNNTRRVIRALEILHVSGKTMSEHLKTQKRELLYNAVLIGLTMDREVLYGRINERVDLMLETGLLDEVKRLYDMNIRDSQSIQAIGYKELYEYLDGKVPLPQAVEQLKQNSRRYAKRQLTWFRNKMPVSWTDMTPPVDIEQKKKEIFECIAGKLEI</sequence>
<protein>
    <recommendedName>
        <fullName evidence="1">tRNA dimethylallyltransferase</fullName>
        <ecNumber evidence="1">2.5.1.75</ecNumber>
    </recommendedName>
    <alternativeName>
        <fullName evidence="1">Dimethylallyl diphosphate:tRNA dimethylallyltransferase</fullName>
        <shortName evidence="1">DMAPP:tRNA dimethylallyltransferase</shortName>
        <shortName evidence="1">DMATase</shortName>
    </alternativeName>
    <alternativeName>
        <fullName evidence="1">Isopentenyl-diphosphate:tRNA isopentenyltransferase</fullName>
        <shortName evidence="1">IPP transferase</shortName>
        <shortName evidence="1">IPPT</shortName>
        <shortName evidence="1">IPTase</shortName>
    </alternativeName>
</protein>
<reference key="1">
    <citation type="journal article" date="2007" name="Nat. Biotechnol.">
        <title>Comparative analysis of the complete genome sequence of the plant growth-promoting bacterium Bacillus amyloliquefaciens FZB42.</title>
        <authorList>
            <person name="Chen X.H."/>
            <person name="Koumoutsi A."/>
            <person name="Scholz R."/>
            <person name="Eisenreich A."/>
            <person name="Schneider K."/>
            <person name="Heinemeyer I."/>
            <person name="Morgenstern B."/>
            <person name="Voss B."/>
            <person name="Hess W.R."/>
            <person name="Reva O."/>
            <person name="Junge H."/>
            <person name="Voigt B."/>
            <person name="Jungblut P.R."/>
            <person name="Vater J."/>
            <person name="Suessmuth R."/>
            <person name="Liesegang H."/>
            <person name="Strittmatter A."/>
            <person name="Gottschalk G."/>
            <person name="Borriss R."/>
        </authorList>
    </citation>
    <scope>NUCLEOTIDE SEQUENCE [LARGE SCALE GENOMIC DNA]</scope>
    <source>
        <strain>DSM 23117 / BGSC 10A6 / LMG 26770 / FZB42</strain>
    </source>
</reference>
<keyword id="KW-0067">ATP-binding</keyword>
<keyword id="KW-0460">Magnesium</keyword>
<keyword id="KW-0547">Nucleotide-binding</keyword>
<keyword id="KW-0808">Transferase</keyword>
<keyword id="KW-0819">tRNA processing</keyword>
<organism>
    <name type="scientific">Bacillus velezensis (strain DSM 23117 / BGSC 10A6 / LMG 26770 / FZB42)</name>
    <name type="common">Bacillus amyloliquefaciens subsp. plantarum</name>
    <dbReference type="NCBI Taxonomy" id="326423"/>
    <lineage>
        <taxon>Bacteria</taxon>
        <taxon>Bacillati</taxon>
        <taxon>Bacillota</taxon>
        <taxon>Bacilli</taxon>
        <taxon>Bacillales</taxon>
        <taxon>Bacillaceae</taxon>
        <taxon>Bacillus</taxon>
        <taxon>Bacillus amyloliquefaciens group</taxon>
    </lineage>
</organism>
<evidence type="ECO:0000255" key="1">
    <source>
        <dbReference type="HAMAP-Rule" id="MF_00185"/>
    </source>
</evidence>
<accession>A7Z500</accession>
<comment type="function">
    <text evidence="1">Catalyzes the transfer of a dimethylallyl group onto the adenine at position 37 in tRNAs that read codons beginning with uridine, leading to the formation of N6-(dimethylallyl)adenosine (i(6)A).</text>
</comment>
<comment type="catalytic activity">
    <reaction evidence="1">
        <text>adenosine(37) in tRNA + dimethylallyl diphosphate = N(6)-dimethylallyladenosine(37) in tRNA + diphosphate</text>
        <dbReference type="Rhea" id="RHEA:26482"/>
        <dbReference type="Rhea" id="RHEA-COMP:10162"/>
        <dbReference type="Rhea" id="RHEA-COMP:10375"/>
        <dbReference type="ChEBI" id="CHEBI:33019"/>
        <dbReference type="ChEBI" id="CHEBI:57623"/>
        <dbReference type="ChEBI" id="CHEBI:74411"/>
        <dbReference type="ChEBI" id="CHEBI:74415"/>
        <dbReference type="EC" id="2.5.1.75"/>
    </reaction>
</comment>
<comment type="cofactor">
    <cofactor evidence="1">
        <name>Mg(2+)</name>
        <dbReference type="ChEBI" id="CHEBI:18420"/>
    </cofactor>
</comment>
<comment type="subunit">
    <text evidence="1">Monomer.</text>
</comment>
<comment type="similarity">
    <text evidence="1">Belongs to the IPP transferase family.</text>
</comment>
<name>MIAA_BACVZ</name>
<feature type="chain" id="PRO_1000020563" description="tRNA dimethylallyltransferase">
    <location>
        <begin position="1"/>
        <end position="314"/>
    </location>
</feature>
<feature type="region of interest" description="Interaction with substrate tRNA" evidence="1">
    <location>
        <begin position="38"/>
        <end position="41"/>
    </location>
</feature>
<feature type="binding site" evidence="1">
    <location>
        <begin position="13"/>
        <end position="20"/>
    </location>
    <ligand>
        <name>ATP</name>
        <dbReference type="ChEBI" id="CHEBI:30616"/>
    </ligand>
</feature>
<feature type="binding site" evidence="1">
    <location>
        <begin position="15"/>
        <end position="20"/>
    </location>
    <ligand>
        <name>substrate</name>
    </ligand>
</feature>
<feature type="site" description="Interaction with substrate tRNA" evidence="1">
    <location>
        <position position="104"/>
    </location>
</feature>
<feature type="site" description="Interaction with substrate tRNA" evidence="1">
    <location>
        <position position="127"/>
    </location>
</feature>
<dbReference type="EC" id="2.5.1.75" evidence="1"/>
<dbReference type="EMBL" id="CP000560">
    <property type="protein sequence ID" value="ABS74076.1"/>
    <property type="molecule type" value="Genomic_DNA"/>
</dbReference>
<dbReference type="RefSeq" id="WP_007410375.1">
    <property type="nucleotide sequence ID" value="NC_009725.2"/>
</dbReference>
<dbReference type="SMR" id="A7Z500"/>
<dbReference type="GeneID" id="93080849"/>
<dbReference type="KEGG" id="bay:RBAM_017130"/>
<dbReference type="HOGENOM" id="CLU_032616_0_1_9"/>
<dbReference type="Proteomes" id="UP000001120">
    <property type="component" value="Chromosome"/>
</dbReference>
<dbReference type="GO" id="GO:0005524">
    <property type="term" value="F:ATP binding"/>
    <property type="evidence" value="ECO:0007669"/>
    <property type="project" value="UniProtKB-UniRule"/>
</dbReference>
<dbReference type="GO" id="GO:0052381">
    <property type="term" value="F:tRNA dimethylallyltransferase activity"/>
    <property type="evidence" value="ECO:0007669"/>
    <property type="project" value="UniProtKB-UniRule"/>
</dbReference>
<dbReference type="GO" id="GO:0006400">
    <property type="term" value="P:tRNA modification"/>
    <property type="evidence" value="ECO:0007669"/>
    <property type="project" value="TreeGrafter"/>
</dbReference>
<dbReference type="FunFam" id="1.10.20.140:FF:000001">
    <property type="entry name" value="tRNA dimethylallyltransferase"/>
    <property type="match status" value="1"/>
</dbReference>
<dbReference type="Gene3D" id="1.10.20.140">
    <property type="match status" value="1"/>
</dbReference>
<dbReference type="Gene3D" id="3.40.50.300">
    <property type="entry name" value="P-loop containing nucleotide triphosphate hydrolases"/>
    <property type="match status" value="1"/>
</dbReference>
<dbReference type="HAMAP" id="MF_00185">
    <property type="entry name" value="IPP_trans"/>
    <property type="match status" value="1"/>
</dbReference>
<dbReference type="InterPro" id="IPR039657">
    <property type="entry name" value="Dimethylallyltransferase"/>
</dbReference>
<dbReference type="InterPro" id="IPR018022">
    <property type="entry name" value="IPT"/>
</dbReference>
<dbReference type="InterPro" id="IPR027417">
    <property type="entry name" value="P-loop_NTPase"/>
</dbReference>
<dbReference type="NCBIfam" id="TIGR00174">
    <property type="entry name" value="miaA"/>
    <property type="match status" value="1"/>
</dbReference>
<dbReference type="PANTHER" id="PTHR11088">
    <property type="entry name" value="TRNA DIMETHYLALLYLTRANSFERASE"/>
    <property type="match status" value="1"/>
</dbReference>
<dbReference type="PANTHER" id="PTHR11088:SF60">
    <property type="entry name" value="TRNA DIMETHYLALLYLTRANSFERASE"/>
    <property type="match status" value="1"/>
</dbReference>
<dbReference type="Pfam" id="PF01715">
    <property type="entry name" value="IPPT"/>
    <property type="match status" value="1"/>
</dbReference>
<dbReference type="SUPFAM" id="SSF52540">
    <property type="entry name" value="P-loop containing nucleoside triphosphate hydrolases"/>
    <property type="match status" value="2"/>
</dbReference>
<gene>
    <name evidence="1" type="primary">miaA</name>
    <name type="ordered locus">RBAM_017130</name>
</gene>
<proteinExistence type="inferred from homology"/>